<protein>
    <recommendedName>
        <fullName evidence="1">Protein GrpE</fullName>
    </recommendedName>
    <alternativeName>
        <fullName evidence="1">HSP-70 cofactor</fullName>
    </alternativeName>
</protein>
<feature type="chain" id="PRO_1000053570" description="Protein GrpE">
    <location>
        <begin position="1"/>
        <end position="208"/>
    </location>
</feature>
<feature type="region of interest" description="Disordered" evidence="2">
    <location>
        <begin position="1"/>
        <end position="38"/>
    </location>
</feature>
<feature type="compositionally biased region" description="Basic and acidic residues" evidence="2">
    <location>
        <begin position="1"/>
        <end position="25"/>
    </location>
</feature>
<feature type="compositionally biased region" description="Acidic residues" evidence="2">
    <location>
        <begin position="29"/>
        <end position="38"/>
    </location>
</feature>
<comment type="function">
    <text evidence="1">Participates actively in the response to hyperosmotic and heat shock by preventing the aggregation of stress-denatured proteins, in association with DnaK and GrpE. It is the nucleotide exchange factor for DnaK and may function as a thermosensor. Unfolded proteins bind initially to DnaJ; upon interaction with the DnaJ-bound protein, DnaK hydrolyzes its bound ATP, resulting in the formation of a stable complex. GrpE releases ADP from DnaK; ATP binding to DnaK triggers the release of the substrate protein, thus completing the reaction cycle. Several rounds of ATP-dependent interactions between DnaJ, DnaK and GrpE are required for fully efficient folding.</text>
</comment>
<comment type="subunit">
    <text evidence="1">Homodimer.</text>
</comment>
<comment type="subcellular location">
    <subcellularLocation>
        <location evidence="1">Cytoplasm</location>
    </subcellularLocation>
</comment>
<comment type="similarity">
    <text evidence="1">Belongs to the GrpE family.</text>
</comment>
<dbReference type="EMBL" id="CP000246">
    <property type="protein sequence ID" value="ABG83434.1"/>
    <property type="molecule type" value="Genomic_DNA"/>
</dbReference>
<dbReference type="RefSeq" id="WP_003461874.1">
    <property type="nucleotide sequence ID" value="NC_008261.1"/>
</dbReference>
<dbReference type="SMR" id="Q0TNS6"/>
<dbReference type="STRING" id="195103.CPF_2291"/>
<dbReference type="PaxDb" id="195103-CPF_2291"/>
<dbReference type="GeneID" id="93001428"/>
<dbReference type="KEGG" id="cpf:CPF_2291"/>
<dbReference type="eggNOG" id="COG0576">
    <property type="taxonomic scope" value="Bacteria"/>
</dbReference>
<dbReference type="HOGENOM" id="CLU_057217_5_0_9"/>
<dbReference type="Proteomes" id="UP000001823">
    <property type="component" value="Chromosome"/>
</dbReference>
<dbReference type="GO" id="GO:0005737">
    <property type="term" value="C:cytoplasm"/>
    <property type="evidence" value="ECO:0007669"/>
    <property type="project" value="UniProtKB-SubCell"/>
</dbReference>
<dbReference type="GO" id="GO:0000774">
    <property type="term" value="F:adenyl-nucleotide exchange factor activity"/>
    <property type="evidence" value="ECO:0007669"/>
    <property type="project" value="InterPro"/>
</dbReference>
<dbReference type="GO" id="GO:0042803">
    <property type="term" value="F:protein homodimerization activity"/>
    <property type="evidence" value="ECO:0007669"/>
    <property type="project" value="InterPro"/>
</dbReference>
<dbReference type="GO" id="GO:0051087">
    <property type="term" value="F:protein-folding chaperone binding"/>
    <property type="evidence" value="ECO:0007669"/>
    <property type="project" value="InterPro"/>
</dbReference>
<dbReference type="GO" id="GO:0051082">
    <property type="term" value="F:unfolded protein binding"/>
    <property type="evidence" value="ECO:0007669"/>
    <property type="project" value="TreeGrafter"/>
</dbReference>
<dbReference type="GO" id="GO:0006457">
    <property type="term" value="P:protein folding"/>
    <property type="evidence" value="ECO:0007669"/>
    <property type="project" value="InterPro"/>
</dbReference>
<dbReference type="CDD" id="cd00446">
    <property type="entry name" value="GrpE"/>
    <property type="match status" value="1"/>
</dbReference>
<dbReference type="FunFam" id="2.30.22.10:FF:000001">
    <property type="entry name" value="Protein GrpE"/>
    <property type="match status" value="1"/>
</dbReference>
<dbReference type="Gene3D" id="3.90.20.20">
    <property type="match status" value="1"/>
</dbReference>
<dbReference type="Gene3D" id="2.30.22.10">
    <property type="entry name" value="Head domain of nucleotide exchange factor GrpE"/>
    <property type="match status" value="1"/>
</dbReference>
<dbReference type="HAMAP" id="MF_01151">
    <property type="entry name" value="GrpE"/>
    <property type="match status" value="1"/>
</dbReference>
<dbReference type="InterPro" id="IPR000740">
    <property type="entry name" value="GrpE"/>
</dbReference>
<dbReference type="InterPro" id="IPR013805">
    <property type="entry name" value="GrpE_coiled_coil"/>
</dbReference>
<dbReference type="InterPro" id="IPR009012">
    <property type="entry name" value="GrpE_head"/>
</dbReference>
<dbReference type="NCBIfam" id="NF010738">
    <property type="entry name" value="PRK14140.1"/>
    <property type="match status" value="1"/>
</dbReference>
<dbReference type="NCBIfam" id="NF010757">
    <property type="entry name" value="PRK14160.1"/>
    <property type="match status" value="1"/>
</dbReference>
<dbReference type="PANTHER" id="PTHR21237">
    <property type="entry name" value="GRPE PROTEIN"/>
    <property type="match status" value="1"/>
</dbReference>
<dbReference type="PANTHER" id="PTHR21237:SF23">
    <property type="entry name" value="GRPE PROTEIN HOMOLOG, MITOCHONDRIAL"/>
    <property type="match status" value="1"/>
</dbReference>
<dbReference type="Pfam" id="PF01025">
    <property type="entry name" value="GrpE"/>
    <property type="match status" value="1"/>
</dbReference>
<dbReference type="PRINTS" id="PR00773">
    <property type="entry name" value="GRPEPROTEIN"/>
</dbReference>
<dbReference type="SUPFAM" id="SSF58014">
    <property type="entry name" value="Coiled-coil domain of nucleotide exchange factor GrpE"/>
    <property type="match status" value="1"/>
</dbReference>
<dbReference type="SUPFAM" id="SSF51064">
    <property type="entry name" value="Head domain of nucleotide exchange factor GrpE"/>
    <property type="match status" value="1"/>
</dbReference>
<dbReference type="PROSITE" id="PS01071">
    <property type="entry name" value="GRPE"/>
    <property type="match status" value="1"/>
</dbReference>
<keyword id="KW-0143">Chaperone</keyword>
<keyword id="KW-0963">Cytoplasm</keyword>
<keyword id="KW-0346">Stress response</keyword>
<gene>
    <name evidence="1" type="primary">grpE</name>
    <name type="ordered locus">CPF_2291</name>
</gene>
<evidence type="ECO:0000255" key="1">
    <source>
        <dbReference type="HAMAP-Rule" id="MF_01151"/>
    </source>
</evidence>
<evidence type="ECO:0000256" key="2">
    <source>
        <dbReference type="SAM" id="MobiDB-lite"/>
    </source>
</evidence>
<proteinExistence type="inferred from homology"/>
<reference key="1">
    <citation type="journal article" date="2006" name="Genome Res.">
        <title>Skewed genomic variability in strains of the toxigenic bacterial pathogen, Clostridium perfringens.</title>
        <authorList>
            <person name="Myers G.S.A."/>
            <person name="Rasko D.A."/>
            <person name="Cheung J.K."/>
            <person name="Ravel J."/>
            <person name="Seshadri R."/>
            <person name="DeBoy R.T."/>
            <person name="Ren Q."/>
            <person name="Varga J."/>
            <person name="Awad M.M."/>
            <person name="Brinkac L.M."/>
            <person name="Daugherty S.C."/>
            <person name="Haft D.H."/>
            <person name="Dodson R.J."/>
            <person name="Madupu R."/>
            <person name="Nelson W.C."/>
            <person name="Rosovitz M.J."/>
            <person name="Sullivan S.A."/>
            <person name="Khouri H."/>
            <person name="Dimitrov G.I."/>
            <person name="Watkins K.L."/>
            <person name="Mulligan S."/>
            <person name="Benton J."/>
            <person name="Radune D."/>
            <person name="Fisher D.J."/>
            <person name="Atkins H.S."/>
            <person name="Hiscox T."/>
            <person name="Jost B.H."/>
            <person name="Billington S.J."/>
            <person name="Songer J.G."/>
            <person name="McClane B.A."/>
            <person name="Titball R.W."/>
            <person name="Rood J.I."/>
            <person name="Melville S.B."/>
            <person name="Paulsen I.T."/>
        </authorList>
    </citation>
    <scope>NUCLEOTIDE SEQUENCE [LARGE SCALE GENOMIC DNA]</scope>
    <source>
        <strain>ATCC 13124 / DSM 756 / JCM 1290 / NCIMB 6125 / NCTC 8237 / S 107 / Type A</strain>
    </source>
</reference>
<accession>Q0TNS6</accession>
<sequence>MVDNKDFNEELKENIQEELDNETKAENPNIDEEVEEVSEDIKADEKVIDFEELKALKEENTMFKSKTKKLENELEALKDRLLRISAEYENYRKRTDKEKERIYTDACEDVLIKMLPVLDNLERALAVDGTVEDLKKGVEMTVRQFEDALEKLQVEEISTENGFDPELHQAMMVVEQEGAEPNQVAQVFQKGYKRGDKVIRHSMVTVTK</sequence>
<name>GRPE_CLOP1</name>
<organism>
    <name type="scientific">Clostridium perfringens (strain ATCC 13124 / DSM 756 / JCM 1290 / NCIMB 6125 / NCTC 8237 / Type A)</name>
    <dbReference type="NCBI Taxonomy" id="195103"/>
    <lineage>
        <taxon>Bacteria</taxon>
        <taxon>Bacillati</taxon>
        <taxon>Bacillota</taxon>
        <taxon>Clostridia</taxon>
        <taxon>Eubacteriales</taxon>
        <taxon>Clostridiaceae</taxon>
        <taxon>Clostridium</taxon>
    </lineage>
</organism>